<sequence>MSTNQETRGFQSEVKQLLQLMIHSLYSNKEIFLRELISNASDAADKLRFKALSNPDLYAGDGELRVCISFDSEKGTLTVSDNGIGMTREQVIDHLGTIAKSGTKEFLAALGSDQAKDSQLIGQFGVGFYSAFIVADKVTVKTRAAGEPADKGVLWESAGEGDYTVADIEKKSRGTDVILHLRDDEKEFLNEWRLRGIIGKYSDHIGLPVEMLTKEYEDEGKEIGEKWEKINKSDALWTRSKNEISDEEYKEFYKHLSHDFADPLLWAHNKVEGNQEYTSLLYVPSKAPWDLFNREHKHGLKLYVQRVFIMDDAEQFMPNYLRFMRGLIDSNDLPLNVSREILQDNKVTAALRKALTKRSLQMLEKLAKDDAEKYQQFWKEFGLVLKEGPAEDFANKEAIAKLLRFASTHNDSSEQNVSLEDYVSRMKEGQKAIYYITADSYVAARNSPHLELFNKKGIEVLLLSDRIDEWMLSYLTEFDGKPLQSITKADLDLGDLADKEAEEQKAQDESFGSFVERVKTLLGGRVKEVRLTHRLTDTPAVVSTDNDQMTTQMAKLFAAAGQPVPEVKYTFELNPEHHLVKKVAEIADEAQFADWVELLLEQAMLAERGSLENPAAFIKRINKLLG</sequence>
<name>HTPG_AGGAC</name>
<evidence type="ECO:0000255" key="1">
    <source>
        <dbReference type="HAMAP-Rule" id="MF_00505"/>
    </source>
</evidence>
<dbReference type="EMBL" id="U26968">
    <property type="protein sequence ID" value="AAC44732.1"/>
    <property type="molecule type" value="Genomic_DNA"/>
</dbReference>
<dbReference type="PIR" id="JC5230">
    <property type="entry name" value="JC5230"/>
</dbReference>
<dbReference type="RefSeq" id="WP_005568838.1">
    <property type="nucleotide sequence ID" value="NZ_JAJHPH010000001.1"/>
</dbReference>
<dbReference type="SMR" id="P54649"/>
<dbReference type="STRING" id="714.ACT75_08045"/>
<dbReference type="eggNOG" id="COG0326">
    <property type="taxonomic scope" value="Bacteria"/>
</dbReference>
<dbReference type="GO" id="GO:0005737">
    <property type="term" value="C:cytoplasm"/>
    <property type="evidence" value="ECO:0007669"/>
    <property type="project" value="UniProtKB-SubCell"/>
</dbReference>
<dbReference type="GO" id="GO:0005524">
    <property type="term" value="F:ATP binding"/>
    <property type="evidence" value="ECO:0007669"/>
    <property type="project" value="UniProtKB-UniRule"/>
</dbReference>
<dbReference type="GO" id="GO:0016887">
    <property type="term" value="F:ATP hydrolysis activity"/>
    <property type="evidence" value="ECO:0007669"/>
    <property type="project" value="InterPro"/>
</dbReference>
<dbReference type="GO" id="GO:0140662">
    <property type="term" value="F:ATP-dependent protein folding chaperone"/>
    <property type="evidence" value="ECO:0007669"/>
    <property type="project" value="InterPro"/>
</dbReference>
<dbReference type="GO" id="GO:0051082">
    <property type="term" value="F:unfolded protein binding"/>
    <property type="evidence" value="ECO:0007669"/>
    <property type="project" value="UniProtKB-UniRule"/>
</dbReference>
<dbReference type="CDD" id="cd16927">
    <property type="entry name" value="HATPase_Hsp90-like"/>
    <property type="match status" value="1"/>
</dbReference>
<dbReference type="FunFam" id="1.20.120.790:FF:000002">
    <property type="entry name" value="Molecular chaperone HtpG"/>
    <property type="match status" value="1"/>
</dbReference>
<dbReference type="FunFam" id="3.30.230.80:FF:000002">
    <property type="entry name" value="Molecular chaperone HtpG"/>
    <property type="match status" value="1"/>
</dbReference>
<dbReference type="FunFam" id="3.30.565.10:FF:000009">
    <property type="entry name" value="Molecular chaperone HtpG"/>
    <property type="match status" value="1"/>
</dbReference>
<dbReference type="FunFam" id="3.40.50.11260:FF:000002">
    <property type="entry name" value="Molecular chaperone HtpG"/>
    <property type="match status" value="1"/>
</dbReference>
<dbReference type="Gene3D" id="3.30.230.80">
    <property type="match status" value="1"/>
</dbReference>
<dbReference type="Gene3D" id="3.40.50.11260">
    <property type="match status" value="1"/>
</dbReference>
<dbReference type="Gene3D" id="1.20.120.790">
    <property type="entry name" value="Heat shock protein 90, C-terminal domain"/>
    <property type="match status" value="1"/>
</dbReference>
<dbReference type="Gene3D" id="3.30.565.10">
    <property type="entry name" value="Histidine kinase-like ATPase, C-terminal domain"/>
    <property type="match status" value="1"/>
</dbReference>
<dbReference type="HAMAP" id="MF_00505">
    <property type="entry name" value="HSP90"/>
    <property type="match status" value="1"/>
</dbReference>
<dbReference type="InterPro" id="IPR036890">
    <property type="entry name" value="HATPase_C_sf"/>
</dbReference>
<dbReference type="InterPro" id="IPR019805">
    <property type="entry name" value="Heat_shock_protein_90_CS"/>
</dbReference>
<dbReference type="InterPro" id="IPR037196">
    <property type="entry name" value="HSP90_C"/>
</dbReference>
<dbReference type="InterPro" id="IPR001404">
    <property type="entry name" value="Hsp90_fam"/>
</dbReference>
<dbReference type="InterPro" id="IPR020575">
    <property type="entry name" value="Hsp90_N"/>
</dbReference>
<dbReference type="InterPro" id="IPR020568">
    <property type="entry name" value="Ribosomal_Su5_D2-typ_SF"/>
</dbReference>
<dbReference type="NCBIfam" id="NF003555">
    <property type="entry name" value="PRK05218.1"/>
    <property type="match status" value="1"/>
</dbReference>
<dbReference type="PANTHER" id="PTHR11528">
    <property type="entry name" value="HEAT SHOCK PROTEIN 90 FAMILY MEMBER"/>
    <property type="match status" value="1"/>
</dbReference>
<dbReference type="Pfam" id="PF13589">
    <property type="entry name" value="HATPase_c_3"/>
    <property type="match status" value="1"/>
</dbReference>
<dbReference type="Pfam" id="PF00183">
    <property type="entry name" value="HSP90"/>
    <property type="match status" value="1"/>
</dbReference>
<dbReference type="PIRSF" id="PIRSF002583">
    <property type="entry name" value="Hsp90"/>
    <property type="match status" value="1"/>
</dbReference>
<dbReference type="PRINTS" id="PR00775">
    <property type="entry name" value="HEATSHOCK90"/>
</dbReference>
<dbReference type="SMART" id="SM00387">
    <property type="entry name" value="HATPase_c"/>
    <property type="match status" value="1"/>
</dbReference>
<dbReference type="SUPFAM" id="SSF55874">
    <property type="entry name" value="ATPase domain of HSP90 chaperone/DNA topoisomerase II/histidine kinase"/>
    <property type="match status" value="1"/>
</dbReference>
<dbReference type="SUPFAM" id="SSF110942">
    <property type="entry name" value="HSP90 C-terminal domain"/>
    <property type="match status" value="1"/>
</dbReference>
<dbReference type="SUPFAM" id="SSF54211">
    <property type="entry name" value="Ribosomal protein S5 domain 2-like"/>
    <property type="match status" value="1"/>
</dbReference>
<dbReference type="PROSITE" id="PS00298">
    <property type="entry name" value="HSP90"/>
    <property type="match status" value="1"/>
</dbReference>
<accession>P54649</accession>
<proteinExistence type="inferred from homology"/>
<organism>
    <name type="scientific">Aggregatibacter actinomycetemcomitans</name>
    <name type="common">Actinobacillus actinomycetemcomitans</name>
    <name type="synonym">Haemophilus actinomycetemcomitans</name>
    <dbReference type="NCBI Taxonomy" id="714"/>
    <lineage>
        <taxon>Bacteria</taxon>
        <taxon>Pseudomonadati</taxon>
        <taxon>Pseudomonadota</taxon>
        <taxon>Gammaproteobacteria</taxon>
        <taxon>Pasteurellales</taxon>
        <taxon>Pasteurellaceae</taxon>
        <taxon>Aggregatibacter</taxon>
    </lineage>
</organism>
<protein>
    <recommendedName>
        <fullName evidence="1">Chaperone protein HtpG</fullName>
    </recommendedName>
    <alternativeName>
        <fullName evidence="1">Heat shock protein HtpG</fullName>
    </alternativeName>
    <alternativeName>
        <fullName evidence="1">High temperature protein G</fullName>
    </alternativeName>
</protein>
<gene>
    <name evidence="1" type="primary">htpG</name>
</gene>
<comment type="function">
    <text evidence="1">Molecular chaperone. Has ATPase activity.</text>
</comment>
<comment type="subunit">
    <text evidence="1">Homodimer.</text>
</comment>
<comment type="subcellular location">
    <subcellularLocation>
        <location evidence="1">Cytoplasm</location>
    </subcellularLocation>
</comment>
<comment type="similarity">
    <text evidence="1">Belongs to the heat shock protein 90 family.</text>
</comment>
<reference key="1">
    <citation type="journal article" date="1996" name="Gene">
        <title>Cloning and characterization of the Actinobacillus actinomycetemcomitans gene encoding a heat-shock protein 90 homologue.</title>
        <authorList>
            <person name="Winston J.L."/>
            <person name="Toth S.I."/>
            <person name="Roe B.A."/>
            <person name="Dyer D.W."/>
        </authorList>
    </citation>
    <scope>NUCLEOTIDE SEQUENCE [GENOMIC DNA]</scope>
    <source>
        <strain>ATCC 43718 / FDC Y4 Serotype B</strain>
    </source>
</reference>
<feature type="chain" id="PRO_0000062965" description="Chaperone protein HtpG">
    <location>
        <begin position="1"/>
        <end position="626"/>
    </location>
</feature>
<feature type="region of interest" description="A; substrate-binding" evidence="1">
    <location>
        <begin position="1"/>
        <end position="339"/>
    </location>
</feature>
<feature type="region of interest" description="B" evidence="1">
    <location>
        <begin position="340"/>
        <end position="555"/>
    </location>
</feature>
<feature type="region of interest" description="C" evidence="1">
    <location>
        <begin position="556"/>
        <end position="626"/>
    </location>
</feature>
<keyword id="KW-0067">ATP-binding</keyword>
<keyword id="KW-0143">Chaperone</keyword>
<keyword id="KW-0963">Cytoplasm</keyword>
<keyword id="KW-0547">Nucleotide-binding</keyword>
<keyword id="KW-0346">Stress response</keyword>